<name>CBY1_RAT</name>
<sequence length="127" mass="14549">MPLFGSIFSPKKTPPRKSASLSNLHSLDRSTRELELGLDYGTPTMNLAGQSLKFENGQWVADSVISGGVDRRETQRLRKRNQQLEEENNLLRLKVDILLDMLSETTAESHLKDKELDELKITNRRRK</sequence>
<proteinExistence type="evidence at protein level"/>
<evidence type="ECO:0000250" key="1">
    <source>
        <dbReference type="UniProtKB" id="Q9D1C2"/>
    </source>
</evidence>
<evidence type="ECO:0000250" key="2">
    <source>
        <dbReference type="UniProtKB" id="Q9Y3M2"/>
    </source>
</evidence>
<evidence type="ECO:0000255" key="3"/>
<evidence type="ECO:0000256" key="4">
    <source>
        <dbReference type="SAM" id="MobiDB-lite"/>
    </source>
</evidence>
<evidence type="ECO:0000305" key="5"/>
<evidence type="ECO:0007744" key="6">
    <source>
    </source>
</evidence>
<comment type="function">
    <text evidence="1 2">Inhibits the Wnt/Wingless pathway by binding to CTNNB1/beta-catenin and inhibiting beta-catenin-mediated transcriptional activation through competition with TCF/LEF transcription factors. Has also been shown to play a role in regulating the intracellular trafficking of polycystin-2/PKD2 and possibly of other intracellular proteins. Promotes adipocyte and cardiomyocyte differentiation.</text>
</comment>
<comment type="subunit">
    <text evidence="2">Homodimer. Homodimerization is essential for nuclear localization and interaction with KPNA4 but is dispensable for interaction with CTNNB1. Interacts with polycystin-2/PKD2 and GM130. Interacts with the C-terminal region of CTNNB1. Interacts (C-terminus) with TCIM (C-terminus), TCIM competes with CTNNB1 for the interaction with CBY1. Interacts with FAM92A; this interaction facilitates targeting of FAM92A to cilium basal body. Interacts with CIBAR2. Interacts with KPNA4.</text>
</comment>
<comment type="subcellular location">
    <subcellularLocation>
        <location evidence="2">Nucleus speckle</location>
    </subcellularLocation>
    <subcellularLocation>
        <location evidence="2">Cytoplasm</location>
        <location evidence="2">Cytoskeleton</location>
        <location evidence="2">Cilium basal body</location>
    </subcellularLocation>
    <subcellularLocation>
        <location evidence="2">Cytoplasm</location>
        <location evidence="2">Cytoskeleton</location>
        <location evidence="2">Microtubule organizing center</location>
        <location evidence="2">Centrosome</location>
        <location evidence="2">Centriole</location>
    </subcellularLocation>
    <subcellularLocation>
        <location evidence="2">Golgi apparatus</location>
    </subcellularLocation>
    <subcellularLocation>
        <location evidence="2">Golgi apparatus</location>
        <location evidence="2">trans-Golgi network</location>
    </subcellularLocation>
    <subcellularLocation>
        <location evidence="1">Cell projection</location>
        <location evidence="1">Cilium</location>
        <location evidence="1">Flagellum</location>
    </subcellularLocation>
    <subcellularLocation>
        <location evidence="2">Nucleus</location>
    </subcellularLocation>
    <subcellularLocation>
        <location evidence="2">Cytoplasm</location>
    </subcellularLocation>
    <text evidence="2">Nuclear, in a punctate manner (By similarity).</text>
</comment>
<comment type="miscellaneous">
    <text>'Chibby' is Japanese for 'small'; the gene was so named for the RNAi phenotype seen in flies.</text>
</comment>
<comment type="similarity">
    <text evidence="5">Belongs to the chibby family.</text>
</comment>
<protein>
    <recommendedName>
        <fullName>Protein chibby homolog 1</fullName>
    </recommendedName>
    <alternativeName>
        <fullName>Cytosolic leucine-rich protein</fullName>
    </alternativeName>
    <alternativeName>
        <fullName>PIGEA-14</fullName>
    </alternativeName>
    <alternativeName>
        <fullName>PKD2 interactor, Golgi and endoplasmic reticulum-associated 1</fullName>
    </alternativeName>
</protein>
<keyword id="KW-0966">Cell projection</keyword>
<keyword id="KW-0969">Cilium</keyword>
<keyword id="KW-0970">Cilium biogenesis/degradation</keyword>
<keyword id="KW-0175">Coiled coil</keyword>
<keyword id="KW-0963">Cytoplasm</keyword>
<keyword id="KW-0206">Cytoskeleton</keyword>
<keyword id="KW-0221">Differentiation</keyword>
<keyword id="KW-0282">Flagellum</keyword>
<keyword id="KW-0333">Golgi apparatus</keyword>
<keyword id="KW-0539">Nucleus</keyword>
<keyword id="KW-0597">Phosphoprotein</keyword>
<keyword id="KW-1185">Reference proteome</keyword>
<feature type="chain" id="PRO_0000058356" description="Protein chibby homolog 1">
    <location>
        <begin position="1"/>
        <end position="127"/>
    </location>
</feature>
<feature type="region of interest" description="Disordered" evidence="4">
    <location>
        <begin position="1"/>
        <end position="25"/>
    </location>
</feature>
<feature type="region of interest" description="Minimal region for the interaction with PKD2" evidence="2">
    <location>
        <begin position="60"/>
        <end position="112"/>
    </location>
</feature>
<feature type="region of interest" description="Leucine-zipper; mediates homodimerization" evidence="2">
    <location>
        <begin position="77"/>
        <end position="98"/>
    </location>
</feature>
<feature type="coiled-coil region" evidence="3">
    <location>
        <begin position="68"/>
        <end position="110"/>
    </location>
</feature>
<feature type="modified residue" description="Phosphoserine" evidence="6">
    <location>
        <position position="9"/>
    </location>
</feature>
<feature type="modified residue" description="Phosphoserine" evidence="6">
    <location>
        <position position="20"/>
    </location>
</feature>
<gene>
    <name type="primary">Cby1</name>
    <name type="synonym">Cby</name>
    <name type="synonym">Pgea1</name>
</gene>
<dbReference type="EMBL" id="AF393211">
    <property type="protein sequence ID" value="AAM73679.1"/>
    <property type="molecule type" value="mRNA"/>
</dbReference>
<dbReference type="RefSeq" id="NP_663709.1">
    <property type="nucleotide sequence ID" value="NM_145676.2"/>
</dbReference>
<dbReference type="RefSeq" id="XP_006242029.1">
    <property type="nucleotide sequence ID" value="XM_006241967.5"/>
</dbReference>
<dbReference type="RefSeq" id="XP_038934353.1">
    <property type="nucleotide sequence ID" value="XM_039078425.2"/>
</dbReference>
<dbReference type="RefSeq" id="XP_038934354.1">
    <property type="nucleotide sequence ID" value="XM_039078426.2"/>
</dbReference>
<dbReference type="RefSeq" id="XP_038934355.1">
    <property type="nucleotide sequence ID" value="XM_039078427.2"/>
</dbReference>
<dbReference type="RefSeq" id="XP_063119067.1">
    <property type="nucleotide sequence ID" value="XM_063262997.1"/>
</dbReference>
<dbReference type="SMR" id="Q8K4I6"/>
<dbReference type="FunCoup" id="Q8K4I6">
    <property type="interactions" value="781"/>
</dbReference>
<dbReference type="STRING" id="10116.ENSRNOP00000018787"/>
<dbReference type="iPTMnet" id="Q8K4I6"/>
<dbReference type="PhosphoSitePlus" id="Q8K4I6"/>
<dbReference type="PaxDb" id="10116-ENSRNOP00000018787"/>
<dbReference type="GeneID" id="246768"/>
<dbReference type="KEGG" id="rno:246768"/>
<dbReference type="UCSC" id="RGD:708481">
    <property type="organism name" value="rat"/>
</dbReference>
<dbReference type="AGR" id="RGD:708481"/>
<dbReference type="CTD" id="25776"/>
<dbReference type="RGD" id="708481">
    <property type="gene designation" value="Cby1"/>
</dbReference>
<dbReference type="eggNOG" id="ENOG502S6C8">
    <property type="taxonomic scope" value="Eukaryota"/>
</dbReference>
<dbReference type="HOGENOM" id="CLU_134504_0_0_1"/>
<dbReference type="InParanoid" id="Q8K4I6"/>
<dbReference type="PhylomeDB" id="Q8K4I6"/>
<dbReference type="TreeFam" id="TF324419"/>
<dbReference type="Reactome" id="R-RNO-3769402">
    <property type="pathway name" value="Deactivation of the beta-catenin transactivating complex"/>
</dbReference>
<dbReference type="PRO" id="PR:Q8K4I6"/>
<dbReference type="Proteomes" id="UP000002494">
    <property type="component" value="Chromosome 7"/>
</dbReference>
<dbReference type="Bgee" id="ENSRNOG00000013892">
    <property type="expression patterns" value="Expressed in cerebellum and 20 other cell types or tissues"/>
</dbReference>
<dbReference type="GO" id="GO:0005814">
    <property type="term" value="C:centriole"/>
    <property type="evidence" value="ECO:0000266"/>
    <property type="project" value="RGD"/>
</dbReference>
<dbReference type="GO" id="GO:0036064">
    <property type="term" value="C:ciliary basal body"/>
    <property type="evidence" value="ECO:0000266"/>
    <property type="project" value="RGD"/>
</dbReference>
<dbReference type="GO" id="GO:0016607">
    <property type="term" value="C:nuclear speck"/>
    <property type="evidence" value="ECO:0007669"/>
    <property type="project" value="UniProtKB-SubCell"/>
</dbReference>
<dbReference type="GO" id="GO:0005634">
    <property type="term" value="C:nucleus"/>
    <property type="evidence" value="ECO:0000266"/>
    <property type="project" value="RGD"/>
</dbReference>
<dbReference type="GO" id="GO:0036126">
    <property type="term" value="C:sperm flagellum"/>
    <property type="evidence" value="ECO:0000250"/>
    <property type="project" value="UniProtKB"/>
</dbReference>
<dbReference type="GO" id="GO:0005802">
    <property type="term" value="C:trans-Golgi network"/>
    <property type="evidence" value="ECO:0000266"/>
    <property type="project" value="RGD"/>
</dbReference>
<dbReference type="GO" id="GO:0008013">
    <property type="term" value="F:beta-catenin binding"/>
    <property type="evidence" value="ECO:0000266"/>
    <property type="project" value="RGD"/>
</dbReference>
<dbReference type="GO" id="GO:0042802">
    <property type="term" value="F:identical protein binding"/>
    <property type="evidence" value="ECO:0000266"/>
    <property type="project" value="RGD"/>
</dbReference>
<dbReference type="GO" id="GO:0042803">
    <property type="term" value="F:protein homodimerization activity"/>
    <property type="evidence" value="ECO:0000266"/>
    <property type="project" value="RGD"/>
</dbReference>
<dbReference type="GO" id="GO:0060070">
    <property type="term" value="P:canonical Wnt signaling pathway"/>
    <property type="evidence" value="ECO:0000266"/>
    <property type="project" value="RGD"/>
</dbReference>
<dbReference type="GO" id="GO:0055007">
    <property type="term" value="P:cardiac muscle cell differentiation"/>
    <property type="evidence" value="ECO:0000250"/>
    <property type="project" value="UniProtKB"/>
</dbReference>
<dbReference type="GO" id="GO:0060271">
    <property type="term" value="P:cilium assembly"/>
    <property type="evidence" value="ECO:0000266"/>
    <property type="project" value="RGD"/>
</dbReference>
<dbReference type="GO" id="GO:0045444">
    <property type="term" value="P:fat cell differentiation"/>
    <property type="evidence" value="ECO:0000250"/>
    <property type="project" value="UniProtKB"/>
</dbReference>
<dbReference type="GO" id="GO:0033504">
    <property type="term" value="P:floor plate development"/>
    <property type="evidence" value="ECO:0000266"/>
    <property type="project" value="RGD"/>
</dbReference>
<dbReference type="GO" id="GO:0090090">
    <property type="term" value="P:negative regulation of canonical Wnt signaling pathway"/>
    <property type="evidence" value="ECO:0000266"/>
    <property type="project" value="RGD"/>
</dbReference>
<dbReference type="GO" id="GO:0045892">
    <property type="term" value="P:negative regulation of DNA-templated transcription"/>
    <property type="evidence" value="ECO:0000266"/>
    <property type="project" value="RGD"/>
</dbReference>
<dbReference type="GO" id="GO:0030178">
    <property type="term" value="P:negative regulation of Wnt signaling pathway"/>
    <property type="evidence" value="ECO:0000266"/>
    <property type="project" value="RGD"/>
</dbReference>
<dbReference type="GO" id="GO:0051289">
    <property type="term" value="P:protein homotetramerization"/>
    <property type="evidence" value="ECO:0000266"/>
    <property type="project" value="RGD"/>
</dbReference>
<dbReference type="GO" id="GO:0008104">
    <property type="term" value="P:protein localization"/>
    <property type="evidence" value="ECO:0000266"/>
    <property type="project" value="RGD"/>
</dbReference>
<dbReference type="CDD" id="cd07429">
    <property type="entry name" value="Cby_like"/>
    <property type="match status" value="1"/>
</dbReference>
<dbReference type="InterPro" id="IPR028118">
    <property type="entry name" value="Chibby_fam"/>
</dbReference>
<dbReference type="PANTHER" id="PTHR21533">
    <property type="entry name" value="LEUCINE-RICH PROTEIN"/>
    <property type="match status" value="1"/>
</dbReference>
<dbReference type="PANTHER" id="PTHR21533:SF20">
    <property type="entry name" value="PROTEIN CHIBBY HOMOLOG 1"/>
    <property type="match status" value="1"/>
</dbReference>
<dbReference type="Pfam" id="PF14645">
    <property type="entry name" value="Chibby"/>
    <property type="match status" value="1"/>
</dbReference>
<reference key="1">
    <citation type="submission" date="2001-06" db="EMBL/GenBank/DDBJ databases">
        <title>A conserved cytosolic leucine-rich protein (LRP) in vertebrate animals.</title>
        <authorList>
            <person name="Huang C.-H."/>
        </authorList>
    </citation>
    <scope>NUCLEOTIDE SEQUENCE [MRNA]</scope>
</reference>
<reference key="2">
    <citation type="journal article" date="2012" name="Nat. Commun.">
        <title>Quantitative maps of protein phosphorylation sites across 14 different rat organs and tissues.</title>
        <authorList>
            <person name="Lundby A."/>
            <person name="Secher A."/>
            <person name="Lage K."/>
            <person name="Nordsborg N.B."/>
            <person name="Dmytriyev A."/>
            <person name="Lundby C."/>
            <person name="Olsen J.V."/>
        </authorList>
    </citation>
    <scope>PHOSPHORYLATION [LARGE SCALE ANALYSIS] AT SER-9 AND SER-20</scope>
    <scope>IDENTIFICATION BY MASS SPECTROMETRY [LARGE SCALE ANALYSIS]</scope>
</reference>
<accession>Q8K4I6</accession>
<organism>
    <name type="scientific">Rattus norvegicus</name>
    <name type="common">Rat</name>
    <dbReference type="NCBI Taxonomy" id="10116"/>
    <lineage>
        <taxon>Eukaryota</taxon>
        <taxon>Metazoa</taxon>
        <taxon>Chordata</taxon>
        <taxon>Craniata</taxon>
        <taxon>Vertebrata</taxon>
        <taxon>Euteleostomi</taxon>
        <taxon>Mammalia</taxon>
        <taxon>Eutheria</taxon>
        <taxon>Euarchontoglires</taxon>
        <taxon>Glires</taxon>
        <taxon>Rodentia</taxon>
        <taxon>Myomorpha</taxon>
        <taxon>Muroidea</taxon>
        <taxon>Muridae</taxon>
        <taxon>Murinae</taxon>
        <taxon>Rattus</taxon>
    </lineage>
</organism>